<protein>
    <recommendedName>
        <fullName evidence="1">Large ribosomal subunit protein uL23</fullName>
    </recommendedName>
    <alternativeName>
        <fullName evidence="2">50S ribosomal protein L23</fullName>
    </alternativeName>
</protein>
<name>RL23_DECAR</name>
<proteinExistence type="inferred from homology"/>
<reference key="1">
    <citation type="journal article" date="2009" name="BMC Genomics">
        <title>Metabolic analysis of the soil microbe Dechloromonas aromatica str. RCB: indications of a surprisingly complex life-style and cryptic anaerobic pathways for aromatic degradation.</title>
        <authorList>
            <person name="Salinero K.K."/>
            <person name="Keller K."/>
            <person name="Feil W.S."/>
            <person name="Feil H."/>
            <person name="Trong S."/>
            <person name="Di Bartolo G."/>
            <person name="Lapidus A."/>
        </authorList>
    </citation>
    <scope>NUCLEOTIDE SEQUENCE [LARGE SCALE GENOMIC DNA]</scope>
    <source>
        <strain>RCB</strain>
    </source>
</reference>
<organism>
    <name type="scientific">Dechloromonas aromatica (strain RCB)</name>
    <dbReference type="NCBI Taxonomy" id="159087"/>
    <lineage>
        <taxon>Bacteria</taxon>
        <taxon>Pseudomonadati</taxon>
        <taxon>Pseudomonadota</taxon>
        <taxon>Betaproteobacteria</taxon>
        <taxon>Rhodocyclales</taxon>
        <taxon>Azonexaceae</taxon>
        <taxon>Dechloromonas</taxon>
    </lineage>
</organism>
<keyword id="KW-0687">Ribonucleoprotein</keyword>
<keyword id="KW-0689">Ribosomal protein</keyword>
<keyword id="KW-0694">RNA-binding</keyword>
<keyword id="KW-0699">rRNA-binding</keyword>
<comment type="function">
    <text evidence="1">One of the early assembly proteins it binds 23S rRNA. One of the proteins that surrounds the polypeptide exit tunnel on the outside of the ribosome. Forms the main docking site for trigger factor binding to the ribosome.</text>
</comment>
<comment type="subunit">
    <text evidence="1">Part of the 50S ribosomal subunit. Contacts protein L29, and trigger factor when it is bound to the ribosome.</text>
</comment>
<comment type="similarity">
    <text evidence="1">Belongs to the universal ribosomal protein uL23 family.</text>
</comment>
<accession>Q47JA1</accession>
<sequence length="100" mass="11124">MNQERLMQVLLAPQISEKATYVADKYEQVIFRVASDATKPEIKAAVELLFKVEVEGVQVANVKGKVKRFKGATGRRKGWKKAYVSLKPGQEINFVEGGNA</sequence>
<gene>
    <name evidence="1" type="primary">rplW</name>
    <name type="ordered locus">Daro_0321</name>
</gene>
<feature type="chain" id="PRO_0000272738" description="Large ribosomal subunit protein uL23">
    <location>
        <begin position="1"/>
        <end position="100"/>
    </location>
</feature>
<dbReference type="EMBL" id="CP000089">
    <property type="protein sequence ID" value="AAZ45080.1"/>
    <property type="molecule type" value="Genomic_DNA"/>
</dbReference>
<dbReference type="SMR" id="Q47JA1"/>
<dbReference type="STRING" id="159087.Daro_0321"/>
<dbReference type="KEGG" id="dar:Daro_0321"/>
<dbReference type="eggNOG" id="COG0089">
    <property type="taxonomic scope" value="Bacteria"/>
</dbReference>
<dbReference type="HOGENOM" id="CLU_037562_3_1_4"/>
<dbReference type="OrthoDB" id="9793353at2"/>
<dbReference type="GO" id="GO:1990904">
    <property type="term" value="C:ribonucleoprotein complex"/>
    <property type="evidence" value="ECO:0007669"/>
    <property type="project" value="UniProtKB-KW"/>
</dbReference>
<dbReference type="GO" id="GO:0005840">
    <property type="term" value="C:ribosome"/>
    <property type="evidence" value="ECO:0007669"/>
    <property type="project" value="UniProtKB-KW"/>
</dbReference>
<dbReference type="GO" id="GO:0019843">
    <property type="term" value="F:rRNA binding"/>
    <property type="evidence" value="ECO:0007669"/>
    <property type="project" value="UniProtKB-UniRule"/>
</dbReference>
<dbReference type="GO" id="GO:0003735">
    <property type="term" value="F:structural constituent of ribosome"/>
    <property type="evidence" value="ECO:0007669"/>
    <property type="project" value="InterPro"/>
</dbReference>
<dbReference type="GO" id="GO:0006412">
    <property type="term" value="P:translation"/>
    <property type="evidence" value="ECO:0007669"/>
    <property type="project" value="UniProtKB-UniRule"/>
</dbReference>
<dbReference type="FunFam" id="3.30.70.330:FF:000001">
    <property type="entry name" value="50S ribosomal protein L23"/>
    <property type="match status" value="1"/>
</dbReference>
<dbReference type="Gene3D" id="3.30.70.330">
    <property type="match status" value="1"/>
</dbReference>
<dbReference type="HAMAP" id="MF_01369_B">
    <property type="entry name" value="Ribosomal_uL23_B"/>
    <property type="match status" value="1"/>
</dbReference>
<dbReference type="InterPro" id="IPR012677">
    <property type="entry name" value="Nucleotide-bd_a/b_plait_sf"/>
</dbReference>
<dbReference type="InterPro" id="IPR013025">
    <property type="entry name" value="Ribosomal_uL23-like"/>
</dbReference>
<dbReference type="InterPro" id="IPR012678">
    <property type="entry name" value="Ribosomal_uL23/eL15/eS24_sf"/>
</dbReference>
<dbReference type="NCBIfam" id="NF004359">
    <property type="entry name" value="PRK05738.1-3"/>
    <property type="match status" value="1"/>
</dbReference>
<dbReference type="NCBIfam" id="NF004363">
    <property type="entry name" value="PRK05738.2-4"/>
    <property type="match status" value="1"/>
</dbReference>
<dbReference type="PANTHER" id="PTHR11620">
    <property type="entry name" value="60S RIBOSOMAL PROTEIN L23A"/>
    <property type="match status" value="1"/>
</dbReference>
<dbReference type="Pfam" id="PF00276">
    <property type="entry name" value="Ribosomal_L23"/>
    <property type="match status" value="1"/>
</dbReference>
<dbReference type="SUPFAM" id="SSF54189">
    <property type="entry name" value="Ribosomal proteins S24e, L23 and L15e"/>
    <property type="match status" value="1"/>
</dbReference>
<evidence type="ECO:0000255" key="1">
    <source>
        <dbReference type="HAMAP-Rule" id="MF_01369"/>
    </source>
</evidence>
<evidence type="ECO:0000305" key="2"/>